<feature type="chain" id="PRO_0000209226" description="Bifunctional glutamine synthetase adenylyltransferase/adenylyl-removing enzyme">
    <location>
        <begin position="1"/>
        <end position="988"/>
    </location>
</feature>
<feature type="region of interest" description="Adenylyl removase" evidence="1">
    <location>
        <begin position="1"/>
        <end position="472"/>
    </location>
</feature>
<feature type="region of interest" description="Adenylyl transferase" evidence="1">
    <location>
        <begin position="476"/>
        <end position="988"/>
    </location>
</feature>
<evidence type="ECO:0000255" key="1">
    <source>
        <dbReference type="HAMAP-Rule" id="MF_00802"/>
    </source>
</evidence>
<dbReference type="EC" id="2.7.7.89" evidence="1"/>
<dbReference type="EC" id="2.7.7.42" evidence="1"/>
<dbReference type="EMBL" id="AE007869">
    <property type="protein sequence ID" value="AAK86790.2"/>
    <property type="molecule type" value="Genomic_DNA"/>
</dbReference>
<dbReference type="PIR" id="AE2697">
    <property type="entry name" value="AE2697"/>
</dbReference>
<dbReference type="PIR" id="E97479">
    <property type="entry name" value="E97479"/>
</dbReference>
<dbReference type="RefSeq" id="NP_354005.2">
    <property type="nucleotide sequence ID" value="NC_003062.2"/>
</dbReference>
<dbReference type="RefSeq" id="WP_010971304.1">
    <property type="nucleotide sequence ID" value="NC_003062.2"/>
</dbReference>
<dbReference type="SMR" id="Q8UGQ4"/>
<dbReference type="STRING" id="176299.Atu0981"/>
<dbReference type="EnsemblBacteria" id="AAK86790">
    <property type="protein sequence ID" value="AAK86790"/>
    <property type="gene ID" value="Atu0981"/>
</dbReference>
<dbReference type="GeneID" id="1133019"/>
<dbReference type="KEGG" id="atu:Atu0981"/>
<dbReference type="PATRIC" id="fig|176299.10.peg.993"/>
<dbReference type="eggNOG" id="COG1391">
    <property type="taxonomic scope" value="Bacteria"/>
</dbReference>
<dbReference type="HOGENOM" id="CLU_006233_0_0_5"/>
<dbReference type="OrthoDB" id="9759366at2"/>
<dbReference type="PhylomeDB" id="Q8UGQ4"/>
<dbReference type="BioCyc" id="AGRO:ATU0981-MONOMER"/>
<dbReference type="Proteomes" id="UP000000813">
    <property type="component" value="Chromosome circular"/>
</dbReference>
<dbReference type="GO" id="GO:0005829">
    <property type="term" value="C:cytosol"/>
    <property type="evidence" value="ECO:0007669"/>
    <property type="project" value="TreeGrafter"/>
</dbReference>
<dbReference type="GO" id="GO:0008882">
    <property type="term" value="F:[glutamate-ammonia-ligase] adenylyltransferase activity"/>
    <property type="evidence" value="ECO:0007669"/>
    <property type="project" value="UniProtKB-UniRule"/>
</dbReference>
<dbReference type="GO" id="GO:0047388">
    <property type="term" value="F:[glutamine synthetase]-adenylyl-L-tyrosine phosphorylase activity"/>
    <property type="evidence" value="ECO:0007669"/>
    <property type="project" value="UniProtKB-EC"/>
</dbReference>
<dbReference type="GO" id="GO:0005524">
    <property type="term" value="F:ATP binding"/>
    <property type="evidence" value="ECO:0007669"/>
    <property type="project" value="UniProtKB-UniRule"/>
</dbReference>
<dbReference type="GO" id="GO:0000287">
    <property type="term" value="F:magnesium ion binding"/>
    <property type="evidence" value="ECO:0007669"/>
    <property type="project" value="UniProtKB-UniRule"/>
</dbReference>
<dbReference type="GO" id="GO:0000820">
    <property type="term" value="P:regulation of glutamine family amino acid metabolic process"/>
    <property type="evidence" value="ECO:0007669"/>
    <property type="project" value="UniProtKB-UniRule"/>
</dbReference>
<dbReference type="CDD" id="cd05401">
    <property type="entry name" value="NT_GlnE_GlnD_like"/>
    <property type="match status" value="2"/>
</dbReference>
<dbReference type="Gene3D" id="1.20.120.1510">
    <property type="match status" value="1"/>
</dbReference>
<dbReference type="Gene3D" id="3.30.460.10">
    <property type="entry name" value="Beta Polymerase, domain 2"/>
    <property type="match status" value="2"/>
</dbReference>
<dbReference type="Gene3D" id="1.20.120.330">
    <property type="entry name" value="Nucleotidyltransferases domain 2"/>
    <property type="match status" value="2"/>
</dbReference>
<dbReference type="HAMAP" id="MF_00802">
    <property type="entry name" value="GlnE"/>
    <property type="match status" value="1"/>
</dbReference>
<dbReference type="InterPro" id="IPR023057">
    <property type="entry name" value="GlnE"/>
</dbReference>
<dbReference type="InterPro" id="IPR005190">
    <property type="entry name" value="GlnE_rpt_dom"/>
</dbReference>
<dbReference type="InterPro" id="IPR043519">
    <property type="entry name" value="NT_sf"/>
</dbReference>
<dbReference type="InterPro" id="IPR013546">
    <property type="entry name" value="PII_UdlTrfase/GS_AdlTrfase"/>
</dbReference>
<dbReference type="NCBIfam" id="NF008292">
    <property type="entry name" value="PRK11072.1"/>
    <property type="match status" value="1"/>
</dbReference>
<dbReference type="NCBIfam" id="NF010706">
    <property type="entry name" value="PRK14108.1"/>
    <property type="match status" value="1"/>
</dbReference>
<dbReference type="PANTHER" id="PTHR30621:SF0">
    <property type="entry name" value="BIFUNCTIONAL GLUTAMINE SYNTHETASE ADENYLYLTRANSFERASE_ADENYLYL-REMOVING ENZYME"/>
    <property type="match status" value="1"/>
</dbReference>
<dbReference type="PANTHER" id="PTHR30621">
    <property type="entry name" value="GLUTAMINE SYNTHETASE ADENYLYLTRANSFERASE"/>
    <property type="match status" value="1"/>
</dbReference>
<dbReference type="Pfam" id="PF08335">
    <property type="entry name" value="GlnD_UR_UTase"/>
    <property type="match status" value="1"/>
</dbReference>
<dbReference type="Pfam" id="PF03710">
    <property type="entry name" value="GlnE"/>
    <property type="match status" value="2"/>
</dbReference>
<dbReference type="SUPFAM" id="SSF81301">
    <property type="entry name" value="Nucleotidyltransferase"/>
    <property type="match status" value="2"/>
</dbReference>
<dbReference type="SUPFAM" id="SSF81593">
    <property type="entry name" value="Nucleotidyltransferase substrate binding subunit/domain"/>
    <property type="match status" value="2"/>
</dbReference>
<keyword id="KW-0067">ATP-binding</keyword>
<keyword id="KW-0460">Magnesium</keyword>
<keyword id="KW-0511">Multifunctional enzyme</keyword>
<keyword id="KW-0547">Nucleotide-binding</keyword>
<keyword id="KW-0548">Nucleotidyltransferase</keyword>
<keyword id="KW-1185">Reference proteome</keyword>
<keyword id="KW-0808">Transferase</keyword>
<name>GLNE_AGRFC</name>
<protein>
    <recommendedName>
        <fullName evidence="1">Bifunctional glutamine synthetase adenylyltransferase/adenylyl-removing enzyme</fullName>
    </recommendedName>
    <alternativeName>
        <fullName evidence="1">ATP:glutamine synthetase adenylyltransferase</fullName>
    </alternativeName>
    <alternativeName>
        <fullName evidence="1">ATase</fullName>
    </alternativeName>
    <domain>
        <recommendedName>
            <fullName evidence="1">Glutamine synthetase adenylyl-L-tyrosine phosphorylase</fullName>
            <ecNumber evidence="1">2.7.7.89</ecNumber>
        </recommendedName>
        <alternativeName>
            <fullName evidence="1">Adenylyl removase</fullName>
            <shortName evidence="1">AR</shortName>
            <shortName evidence="1">AT-N</shortName>
        </alternativeName>
    </domain>
    <domain>
        <recommendedName>
            <fullName evidence="1">Glutamine synthetase adenylyl transferase</fullName>
            <ecNumber evidence="1">2.7.7.42</ecNumber>
        </recommendedName>
        <alternativeName>
            <fullName evidence="1">Adenylyl transferase</fullName>
            <shortName evidence="1">AT</shortName>
            <shortName evidence="1">AT-C</shortName>
        </alternativeName>
    </domain>
</protein>
<comment type="function">
    <text evidence="1">Involved in the regulation of glutamine synthetase GlnA, a key enzyme in the process to assimilate ammonia. When cellular nitrogen levels are high, the C-terminal adenylyl transferase (AT) inactivates GlnA by covalent transfer of an adenylyl group from ATP to specific tyrosine residue of GlnA, thus reducing its activity. Conversely, when nitrogen levels are low, the N-terminal adenylyl removase (AR) activates GlnA by removing the adenylyl group by phosphorolysis, increasing its activity. The regulatory region of GlnE binds the signal transduction protein PII (GlnB) which indicates the nitrogen status of the cell.</text>
</comment>
<comment type="catalytic activity">
    <reaction evidence="1">
        <text>[glutamine synthetase]-O(4)-(5'-adenylyl)-L-tyrosine + phosphate = [glutamine synthetase]-L-tyrosine + ADP</text>
        <dbReference type="Rhea" id="RHEA:43716"/>
        <dbReference type="Rhea" id="RHEA-COMP:10660"/>
        <dbReference type="Rhea" id="RHEA-COMP:10661"/>
        <dbReference type="ChEBI" id="CHEBI:43474"/>
        <dbReference type="ChEBI" id="CHEBI:46858"/>
        <dbReference type="ChEBI" id="CHEBI:83624"/>
        <dbReference type="ChEBI" id="CHEBI:456216"/>
        <dbReference type="EC" id="2.7.7.89"/>
    </reaction>
</comment>
<comment type="catalytic activity">
    <reaction evidence="1">
        <text>[glutamine synthetase]-L-tyrosine + ATP = [glutamine synthetase]-O(4)-(5'-adenylyl)-L-tyrosine + diphosphate</text>
        <dbReference type="Rhea" id="RHEA:18589"/>
        <dbReference type="Rhea" id="RHEA-COMP:10660"/>
        <dbReference type="Rhea" id="RHEA-COMP:10661"/>
        <dbReference type="ChEBI" id="CHEBI:30616"/>
        <dbReference type="ChEBI" id="CHEBI:33019"/>
        <dbReference type="ChEBI" id="CHEBI:46858"/>
        <dbReference type="ChEBI" id="CHEBI:83624"/>
        <dbReference type="EC" id="2.7.7.42"/>
    </reaction>
</comment>
<comment type="cofactor">
    <cofactor evidence="1">
        <name>Mg(2+)</name>
        <dbReference type="ChEBI" id="CHEBI:18420"/>
    </cofactor>
</comment>
<comment type="similarity">
    <text evidence="1">Belongs to the GlnE family.</text>
</comment>
<accession>Q8UGQ4</accession>
<accession>Q7D079</accession>
<sequence length="988" mass="109210">MTKRETVERRLSEVPPGVIRPYTQTELKSVFSTLKDIGKAEPAVAALLAGESPLKDFIAAAFTLSPYLRDMAAADEGLLTLAISKPLEPLLTDLVRDARDCWKPAEDAVPVENEVMSRLRIAKRRLSFVAALADLARIFTARDTTRWLSEMADASLSAAIDHLLLSAHESGKLKLKNLAAPSEGSGLIVLGMGKLGARELNYSSDIDAVVFFEPSAGIIDDPYDATENFGRMMRRLVRIMQERTADGYVFRTDLRLRPDPGSTPLAIPVEAALLYYEGRGQNWERAAYIKARPVAGDIKAGENFLRELTPFIFRKYLDYAAIADIHSIKRQIHAHKGHGAIAVKGHNVKLGRGGIREIEFFAQTQQLIAGGRMPPLRVRATEDALAALTEAKWIDAETRDSLTEAYWFLREVEHRIQMVRDEQTHVLPDTEAELKRIAFMLGFEDTKAFSEKLEEVLRLVERRYSALFEQETKLSGEAGNLVFTGQKDDPDTLKTLSTLGFQRPEDISRVIRTWHNGRYRATQSVEARERLTELTPDLLRAFGESKRADEALLRFDNFLSGLPAGIQLFSLLGNNPALLSLLVTIMSSAPRLAEIIAARPHVFDGMLDPALMSDVPTRDYLAHRMGNFLSNARHYEDILDRLRIFAAEQRFLIGVRLLTGAIRGEVAARAFTHLADLVIEAALNAVLSEMEAAHGPYPGGRVAVMGMGKLGSFELTAGSDVDLILLYDYDDTAQESTGAKPLDVVRYFTRVTQRLIAALSAPTAEGVLYEVDMRLRPSGNKGPVATRISAFEKYQREEAWTWEHMALSRARLICGDASLMEDARSIIASILSQKRDVAKVSTDVLDMRSLIEQEKPPENNWDFKLINGGLIDLEFIAQYLALIGPVKGLGAHEPGRNTAEALQALAAPVMESQAFDDCMAAMGLYTEISQIVRLCIDGAFNPKEAPAGLIDLVCRAGDCPDIPTLEGEVKRLSKAVRKAFVAVVKNGG</sequence>
<proteinExistence type="inferred from homology"/>
<gene>
    <name evidence="1" type="primary">glnE</name>
    <name type="ordered locus">Atu0981</name>
    <name type="ORF">AGR_C_1798</name>
</gene>
<reference key="1">
    <citation type="journal article" date="2001" name="Science">
        <title>The genome of the natural genetic engineer Agrobacterium tumefaciens C58.</title>
        <authorList>
            <person name="Wood D.W."/>
            <person name="Setubal J.C."/>
            <person name="Kaul R."/>
            <person name="Monks D.E."/>
            <person name="Kitajima J.P."/>
            <person name="Okura V.K."/>
            <person name="Zhou Y."/>
            <person name="Chen L."/>
            <person name="Wood G.E."/>
            <person name="Almeida N.F. Jr."/>
            <person name="Woo L."/>
            <person name="Chen Y."/>
            <person name="Paulsen I.T."/>
            <person name="Eisen J.A."/>
            <person name="Karp P.D."/>
            <person name="Bovee D. Sr."/>
            <person name="Chapman P."/>
            <person name="Clendenning J."/>
            <person name="Deatherage G."/>
            <person name="Gillet W."/>
            <person name="Grant C."/>
            <person name="Kutyavin T."/>
            <person name="Levy R."/>
            <person name="Li M.-J."/>
            <person name="McClelland E."/>
            <person name="Palmieri A."/>
            <person name="Raymond C."/>
            <person name="Rouse G."/>
            <person name="Saenphimmachak C."/>
            <person name="Wu Z."/>
            <person name="Romero P."/>
            <person name="Gordon D."/>
            <person name="Zhang S."/>
            <person name="Yoo H."/>
            <person name="Tao Y."/>
            <person name="Biddle P."/>
            <person name="Jung M."/>
            <person name="Krespan W."/>
            <person name="Perry M."/>
            <person name="Gordon-Kamm B."/>
            <person name="Liao L."/>
            <person name="Kim S."/>
            <person name="Hendrick C."/>
            <person name="Zhao Z.-Y."/>
            <person name="Dolan M."/>
            <person name="Chumley F."/>
            <person name="Tingey S.V."/>
            <person name="Tomb J.-F."/>
            <person name="Gordon M.P."/>
            <person name="Olson M.V."/>
            <person name="Nester E.W."/>
        </authorList>
    </citation>
    <scope>NUCLEOTIDE SEQUENCE [LARGE SCALE GENOMIC DNA]</scope>
    <source>
        <strain>C58 / ATCC 33970</strain>
    </source>
</reference>
<reference key="2">
    <citation type="journal article" date="2001" name="Science">
        <title>Genome sequence of the plant pathogen and biotechnology agent Agrobacterium tumefaciens C58.</title>
        <authorList>
            <person name="Goodner B."/>
            <person name="Hinkle G."/>
            <person name="Gattung S."/>
            <person name="Miller N."/>
            <person name="Blanchard M."/>
            <person name="Qurollo B."/>
            <person name="Goldman B.S."/>
            <person name="Cao Y."/>
            <person name="Askenazi M."/>
            <person name="Halling C."/>
            <person name="Mullin L."/>
            <person name="Houmiel K."/>
            <person name="Gordon J."/>
            <person name="Vaudin M."/>
            <person name="Iartchouk O."/>
            <person name="Epp A."/>
            <person name="Liu F."/>
            <person name="Wollam C."/>
            <person name="Allinger M."/>
            <person name="Doughty D."/>
            <person name="Scott C."/>
            <person name="Lappas C."/>
            <person name="Markelz B."/>
            <person name="Flanagan C."/>
            <person name="Crowell C."/>
            <person name="Gurson J."/>
            <person name="Lomo C."/>
            <person name="Sear C."/>
            <person name="Strub G."/>
            <person name="Cielo C."/>
            <person name="Slater S."/>
        </authorList>
    </citation>
    <scope>NUCLEOTIDE SEQUENCE [LARGE SCALE GENOMIC DNA]</scope>
    <source>
        <strain>C58 / ATCC 33970</strain>
    </source>
</reference>
<organism>
    <name type="scientific">Agrobacterium fabrum (strain C58 / ATCC 33970)</name>
    <name type="common">Agrobacterium tumefaciens (strain C58)</name>
    <dbReference type="NCBI Taxonomy" id="176299"/>
    <lineage>
        <taxon>Bacteria</taxon>
        <taxon>Pseudomonadati</taxon>
        <taxon>Pseudomonadota</taxon>
        <taxon>Alphaproteobacteria</taxon>
        <taxon>Hyphomicrobiales</taxon>
        <taxon>Rhizobiaceae</taxon>
        <taxon>Rhizobium/Agrobacterium group</taxon>
        <taxon>Agrobacterium</taxon>
        <taxon>Agrobacterium tumefaciens complex</taxon>
    </lineage>
</organism>